<evidence type="ECO:0000255" key="1"/>
<evidence type="ECO:0000305" key="2"/>
<keyword id="KW-0067">ATP-binding</keyword>
<keyword id="KW-0077">Bacteriochlorophyll biosynthesis</keyword>
<keyword id="KW-0149">Chlorophyll biosynthesis</keyword>
<keyword id="KW-0436">Ligase</keyword>
<keyword id="KW-0547">Nucleotide-binding</keyword>
<keyword id="KW-0602">Photosynthesis</keyword>
<keyword id="KW-1185">Reference proteome</keyword>
<comment type="function">
    <text>Involved in bacteriochlorophyll biosynthesis; introduces a magnesium ion into protoporphyrin IX to yield Mg-protoporphyrin IX.</text>
</comment>
<comment type="catalytic activity">
    <reaction>
        <text>protoporphyrin IX + Mg(2+) + ATP + H2O = Mg-protoporphyrin IX + ADP + phosphate + 3 H(+)</text>
        <dbReference type="Rhea" id="RHEA:13961"/>
        <dbReference type="ChEBI" id="CHEBI:15377"/>
        <dbReference type="ChEBI" id="CHEBI:15378"/>
        <dbReference type="ChEBI" id="CHEBI:18420"/>
        <dbReference type="ChEBI" id="CHEBI:30616"/>
        <dbReference type="ChEBI" id="CHEBI:43474"/>
        <dbReference type="ChEBI" id="CHEBI:57306"/>
        <dbReference type="ChEBI" id="CHEBI:60492"/>
        <dbReference type="ChEBI" id="CHEBI:456216"/>
        <dbReference type="EC" id="6.6.1.1"/>
    </reaction>
</comment>
<comment type="pathway">
    <text>Porphyrin-containing compound metabolism; bacteriochlorophyll biosynthesis.</text>
</comment>
<comment type="similarity">
    <text evidence="2">Belongs to the Mg-chelatase subunits D/I family.</text>
</comment>
<sequence length="334" mass="36225">MKKPFPFSAIVGQEQMKQAMVLTAIDPGIGGVLVFGDRGTGKSTAVRALAALLPLIKAVEGCPVNSARPEDCPEWAHVSSTTMIERPTPVVDLPLGVTEDRVVGALDIERALTRGEKAFEPGLLARANRGYLYIDEVNLLEDHIVDLLLDVAQSGENVVEREGLSIRHPARFVLVGSGNPEEGELRPQLLDRFGLSVEVRSPRDVETRVEVITRRDAYDADHDAFMEKWGAEDMQLRGRILGARAALPQLKTPNTVLHDCAALCIALGSDGLRGELTLLRAARAQAAFEGAEAVGRSHLRSVATMALSHRLRRDPLDEAGSVSRVERCVAEVLP</sequence>
<name>BCHI_CERS4</name>
<proteinExistence type="evidence at protein level"/>
<protein>
    <recommendedName>
        <fullName>Magnesium-chelatase 38 kDa subunit</fullName>
        <ecNumber>6.6.1.1</ecNumber>
    </recommendedName>
    <alternativeName>
        <fullName>Mg-protoporphyrin IX chelatase</fullName>
    </alternativeName>
</protein>
<feature type="chain" id="PRO_0000206860" description="Magnesium-chelatase 38 kDa subunit">
    <location>
        <begin position="1"/>
        <end position="334"/>
    </location>
</feature>
<feature type="binding site" evidence="1">
    <location>
        <begin position="36"/>
        <end position="43"/>
    </location>
    <ligand>
        <name>ATP</name>
        <dbReference type="ChEBI" id="CHEBI:30616"/>
    </ligand>
</feature>
<feature type="sequence conflict" description="In Ref. 2; AAF24287." evidence="2" ref="2">
    <original>E</original>
    <variation>Q</variation>
    <location>
        <position position="109"/>
    </location>
</feature>
<organism>
    <name type="scientific">Cereibacter sphaeroides (strain ATCC 17023 / DSM 158 / JCM 6121 / CCUG 31486 / LMG 2827 / NBRC 12203 / NCIMB 8253 / ATH 2.4.1.)</name>
    <name type="common">Rhodobacter sphaeroides</name>
    <dbReference type="NCBI Taxonomy" id="272943"/>
    <lineage>
        <taxon>Bacteria</taxon>
        <taxon>Pseudomonadati</taxon>
        <taxon>Pseudomonadota</taxon>
        <taxon>Alphaproteobacteria</taxon>
        <taxon>Rhodobacterales</taxon>
        <taxon>Paracoccaceae</taxon>
        <taxon>Cereibacter</taxon>
    </lineage>
</organism>
<accession>O30819</accession>
<accession>Q3J188</accession>
<accession>Q9RFD2</accession>
<dbReference type="EC" id="6.6.1.1"/>
<dbReference type="EMBL" id="AF017642">
    <property type="protein sequence ID" value="AAB97156.1"/>
    <property type="molecule type" value="Genomic_DNA"/>
</dbReference>
<dbReference type="EMBL" id="AF195122">
    <property type="protein sequence ID" value="AAF24287.1"/>
    <property type="molecule type" value="Genomic_DNA"/>
</dbReference>
<dbReference type="EMBL" id="CP000143">
    <property type="protein sequence ID" value="ABA79446.1"/>
    <property type="molecule type" value="Genomic_DNA"/>
</dbReference>
<dbReference type="PIR" id="T50743">
    <property type="entry name" value="T50743"/>
</dbReference>
<dbReference type="RefSeq" id="WP_002720437.1">
    <property type="nucleotide sequence ID" value="NZ_CP030271.1"/>
</dbReference>
<dbReference type="RefSeq" id="YP_353347.1">
    <property type="nucleotide sequence ID" value="NC_007493.2"/>
</dbReference>
<dbReference type="SMR" id="O30819"/>
<dbReference type="STRING" id="272943.RSP_0273"/>
<dbReference type="EnsemblBacteria" id="ABA79446">
    <property type="protein sequence ID" value="ABA79446"/>
    <property type="gene ID" value="RSP_0273"/>
</dbReference>
<dbReference type="GeneID" id="67447006"/>
<dbReference type="KEGG" id="rsp:RSP_0273"/>
<dbReference type="PATRIC" id="fig|272943.9.peg.2216"/>
<dbReference type="eggNOG" id="COG1239">
    <property type="taxonomic scope" value="Bacteria"/>
</dbReference>
<dbReference type="OrthoDB" id="9775079at2"/>
<dbReference type="PhylomeDB" id="O30819"/>
<dbReference type="BioCyc" id="MetaCyc:MONOMER-13263"/>
<dbReference type="UniPathway" id="UPA00669"/>
<dbReference type="Proteomes" id="UP000002703">
    <property type="component" value="Chromosome 1"/>
</dbReference>
<dbReference type="GO" id="GO:0005524">
    <property type="term" value="F:ATP binding"/>
    <property type="evidence" value="ECO:0007669"/>
    <property type="project" value="UniProtKB-KW"/>
</dbReference>
<dbReference type="GO" id="GO:0016887">
    <property type="term" value="F:ATP hydrolysis activity"/>
    <property type="evidence" value="ECO:0007669"/>
    <property type="project" value="InterPro"/>
</dbReference>
<dbReference type="GO" id="GO:0016851">
    <property type="term" value="F:magnesium chelatase activity"/>
    <property type="evidence" value="ECO:0007669"/>
    <property type="project" value="UniProtKB-EC"/>
</dbReference>
<dbReference type="GO" id="GO:0030494">
    <property type="term" value="P:bacteriochlorophyll biosynthetic process"/>
    <property type="evidence" value="ECO:0007669"/>
    <property type="project" value="UniProtKB-UniPathway"/>
</dbReference>
<dbReference type="GO" id="GO:0015979">
    <property type="term" value="P:photosynthesis"/>
    <property type="evidence" value="ECO:0007669"/>
    <property type="project" value="UniProtKB-KW"/>
</dbReference>
<dbReference type="CDD" id="cd00009">
    <property type="entry name" value="AAA"/>
    <property type="match status" value="1"/>
</dbReference>
<dbReference type="Gene3D" id="1.10.8.80">
    <property type="entry name" value="Magnesium chelatase subunit I, C-Terminal domain"/>
    <property type="match status" value="1"/>
</dbReference>
<dbReference type="Gene3D" id="3.40.50.300">
    <property type="entry name" value="P-loop containing nucleotide triphosphate hydrolases"/>
    <property type="match status" value="1"/>
</dbReference>
<dbReference type="InterPro" id="IPR003593">
    <property type="entry name" value="AAA+_ATPase"/>
</dbReference>
<dbReference type="InterPro" id="IPR045006">
    <property type="entry name" value="CHLI-like"/>
</dbReference>
<dbReference type="InterPro" id="IPR041628">
    <property type="entry name" value="ChlI/MoxR_AAA_lid"/>
</dbReference>
<dbReference type="InterPro" id="IPR011775">
    <property type="entry name" value="Mg_chelatase_ATPase-isu"/>
</dbReference>
<dbReference type="InterPro" id="IPR000523">
    <property type="entry name" value="Mg_chelatse_chII-like_cat_dom"/>
</dbReference>
<dbReference type="InterPro" id="IPR027417">
    <property type="entry name" value="P-loop_NTPase"/>
</dbReference>
<dbReference type="NCBIfam" id="TIGR02030">
    <property type="entry name" value="BchI-ChlI"/>
    <property type="match status" value="1"/>
</dbReference>
<dbReference type="PANTHER" id="PTHR32039">
    <property type="entry name" value="MAGNESIUM-CHELATASE SUBUNIT CHLI"/>
    <property type="match status" value="1"/>
</dbReference>
<dbReference type="PANTHER" id="PTHR32039:SF9">
    <property type="entry name" value="MAGNESIUM-CHELATASE SUBUNIT CHLI-2, CHLOROPLASTIC"/>
    <property type="match status" value="1"/>
</dbReference>
<dbReference type="Pfam" id="PF17863">
    <property type="entry name" value="AAA_lid_2"/>
    <property type="match status" value="1"/>
</dbReference>
<dbReference type="Pfam" id="PF01078">
    <property type="entry name" value="Mg_chelatase"/>
    <property type="match status" value="2"/>
</dbReference>
<dbReference type="SMART" id="SM00382">
    <property type="entry name" value="AAA"/>
    <property type="match status" value="1"/>
</dbReference>
<dbReference type="SUPFAM" id="SSF52540">
    <property type="entry name" value="P-loop containing nucleoside triphosphate hydrolases"/>
    <property type="match status" value="1"/>
</dbReference>
<gene>
    <name type="primary">bchI</name>
    <name type="ordered locus">RHOS4_18780</name>
    <name type="ORF">RSP_0273</name>
</gene>
<reference key="1">
    <citation type="online journal article" date="1997" name="Plant Gene Register">
        <title>Rhodobacter sphaeroides bchI and bchD encoding two subunits of magnesium chelatase.</title>
        <authorList>
            <person name="Hansson M."/>
            <person name="Kannangara C.G."/>
        </authorList>
        <locator>PGR97-190</locator>
    </citation>
    <scope>NUCLEOTIDE SEQUENCE [GENOMIC DNA]</scope>
</reference>
<reference key="2">
    <citation type="journal article" date="2000" name="Nucleic Acids Res.">
        <title>DNA sequence analysis of the photosynthesis region of Rhodobacter sphaeroides 2.4.1.</title>
        <authorList>
            <person name="Choudhary M."/>
            <person name="Kaplan S."/>
        </authorList>
    </citation>
    <scope>NUCLEOTIDE SEQUENCE [GENOMIC DNA]</scope>
</reference>
<reference key="3">
    <citation type="submission" date="2005-09" db="EMBL/GenBank/DDBJ databases">
        <title>Complete sequence of chromosome 1 of Rhodobacter sphaeroides 2.4.1.</title>
        <authorList>
            <person name="Copeland A."/>
            <person name="Lucas S."/>
            <person name="Lapidus A."/>
            <person name="Barry K."/>
            <person name="Detter J.C."/>
            <person name="Glavina T."/>
            <person name="Hammon N."/>
            <person name="Israni S."/>
            <person name="Pitluck S."/>
            <person name="Richardson P."/>
            <person name="Mackenzie C."/>
            <person name="Choudhary M."/>
            <person name="Larimer F."/>
            <person name="Hauser L.J."/>
            <person name="Land M."/>
            <person name="Donohue T.J."/>
            <person name="Kaplan S."/>
        </authorList>
    </citation>
    <scope>NUCLEOTIDE SEQUENCE [LARGE SCALE GENOMIC DNA]</scope>
    <source>
        <strain>ATCC 17023 / DSM 158 / JCM 6121 / CCUG 31486 / LMG 2827 / NBRC 12203 / NCIMB 8253 / ATH 2.4.1.</strain>
    </source>
</reference>
<reference key="4">
    <citation type="journal article" date="1995" name="Proc. Natl. Acad. Sci. U.S.A.">
        <title>Magnesium-protoporphyrin chelatase of Rhodobacter sphaeroides: reconstitution of activity by combining the products of the bchH, -I, and -D genes expressed in Escherichia coli.</title>
        <authorList>
            <person name="Gibson L.C.D."/>
            <person name="Willows R.D."/>
            <person name="Kannangara C.G."/>
            <person name="von Wettstein D."/>
            <person name="Hunter C.N."/>
        </authorList>
    </citation>
    <scope>CHARACTERIZATION</scope>
</reference>